<feature type="chain" id="PRO_1000093183" description="Phosphomethylpyrimidine synthase">
    <location>
        <begin position="1"/>
        <end position="625"/>
    </location>
</feature>
<feature type="binding site" evidence="1">
    <location>
        <position position="231"/>
    </location>
    <ligand>
        <name>substrate</name>
    </ligand>
</feature>
<feature type="binding site" evidence="1">
    <location>
        <position position="260"/>
    </location>
    <ligand>
        <name>substrate</name>
    </ligand>
</feature>
<feature type="binding site" evidence="1">
    <location>
        <position position="289"/>
    </location>
    <ligand>
        <name>substrate</name>
    </ligand>
</feature>
<feature type="binding site" evidence="1">
    <location>
        <position position="325"/>
    </location>
    <ligand>
        <name>substrate</name>
    </ligand>
</feature>
<feature type="binding site" evidence="1">
    <location>
        <begin position="345"/>
        <end position="347"/>
    </location>
    <ligand>
        <name>substrate</name>
    </ligand>
</feature>
<feature type="binding site" evidence="1">
    <location>
        <begin position="386"/>
        <end position="389"/>
    </location>
    <ligand>
        <name>substrate</name>
    </ligand>
</feature>
<feature type="binding site" evidence="1">
    <location>
        <position position="425"/>
    </location>
    <ligand>
        <name>substrate</name>
    </ligand>
</feature>
<feature type="binding site" evidence="1">
    <location>
        <position position="429"/>
    </location>
    <ligand>
        <name>Zn(2+)</name>
        <dbReference type="ChEBI" id="CHEBI:29105"/>
    </ligand>
</feature>
<feature type="binding site" evidence="1">
    <location>
        <position position="452"/>
    </location>
    <ligand>
        <name>substrate</name>
    </ligand>
</feature>
<feature type="binding site" evidence="1">
    <location>
        <position position="493"/>
    </location>
    <ligand>
        <name>Zn(2+)</name>
        <dbReference type="ChEBI" id="CHEBI:29105"/>
    </ligand>
</feature>
<feature type="binding site" evidence="1">
    <location>
        <position position="573"/>
    </location>
    <ligand>
        <name>[4Fe-4S] cluster</name>
        <dbReference type="ChEBI" id="CHEBI:49883"/>
        <note>4Fe-4S-S-AdoMet</note>
    </ligand>
</feature>
<feature type="binding site" evidence="1">
    <location>
        <position position="576"/>
    </location>
    <ligand>
        <name>[4Fe-4S] cluster</name>
        <dbReference type="ChEBI" id="CHEBI:49883"/>
        <note>4Fe-4S-S-AdoMet</note>
    </ligand>
</feature>
<feature type="binding site" evidence="1">
    <location>
        <position position="581"/>
    </location>
    <ligand>
        <name>[4Fe-4S] cluster</name>
        <dbReference type="ChEBI" id="CHEBI:49883"/>
        <note>4Fe-4S-S-AdoMet</note>
    </ligand>
</feature>
<proteinExistence type="inferred from homology"/>
<organism>
    <name type="scientific">Acinetobacter baumannii (strain SDF)</name>
    <dbReference type="NCBI Taxonomy" id="509170"/>
    <lineage>
        <taxon>Bacteria</taxon>
        <taxon>Pseudomonadati</taxon>
        <taxon>Pseudomonadota</taxon>
        <taxon>Gammaproteobacteria</taxon>
        <taxon>Moraxellales</taxon>
        <taxon>Moraxellaceae</taxon>
        <taxon>Acinetobacter</taxon>
        <taxon>Acinetobacter calcoaceticus/baumannii complex</taxon>
    </lineage>
</organism>
<name>THIC_ACIBS</name>
<dbReference type="EC" id="4.1.99.17" evidence="1"/>
<dbReference type="EMBL" id="CU468230">
    <property type="protein sequence ID" value="CAP02551.1"/>
    <property type="molecule type" value="Genomic_DNA"/>
</dbReference>
<dbReference type="SMR" id="B0VMD7"/>
<dbReference type="KEGG" id="abm:ABSDF3281"/>
<dbReference type="HOGENOM" id="CLU_013181_2_1_6"/>
<dbReference type="UniPathway" id="UPA00060"/>
<dbReference type="Proteomes" id="UP000001741">
    <property type="component" value="Chromosome"/>
</dbReference>
<dbReference type="GO" id="GO:0005829">
    <property type="term" value="C:cytosol"/>
    <property type="evidence" value="ECO:0007669"/>
    <property type="project" value="TreeGrafter"/>
</dbReference>
<dbReference type="GO" id="GO:0051539">
    <property type="term" value="F:4 iron, 4 sulfur cluster binding"/>
    <property type="evidence" value="ECO:0007669"/>
    <property type="project" value="UniProtKB-KW"/>
</dbReference>
<dbReference type="GO" id="GO:0016830">
    <property type="term" value="F:carbon-carbon lyase activity"/>
    <property type="evidence" value="ECO:0007669"/>
    <property type="project" value="InterPro"/>
</dbReference>
<dbReference type="GO" id="GO:0008270">
    <property type="term" value="F:zinc ion binding"/>
    <property type="evidence" value="ECO:0007669"/>
    <property type="project" value="UniProtKB-UniRule"/>
</dbReference>
<dbReference type="GO" id="GO:0009228">
    <property type="term" value="P:thiamine biosynthetic process"/>
    <property type="evidence" value="ECO:0007669"/>
    <property type="project" value="UniProtKB-KW"/>
</dbReference>
<dbReference type="GO" id="GO:0009229">
    <property type="term" value="P:thiamine diphosphate biosynthetic process"/>
    <property type="evidence" value="ECO:0007669"/>
    <property type="project" value="UniProtKB-UniRule"/>
</dbReference>
<dbReference type="FunFam" id="3.20.20.540:FF:000001">
    <property type="entry name" value="Phosphomethylpyrimidine synthase"/>
    <property type="match status" value="1"/>
</dbReference>
<dbReference type="Gene3D" id="6.10.250.620">
    <property type="match status" value="1"/>
</dbReference>
<dbReference type="Gene3D" id="3.20.20.540">
    <property type="entry name" value="Radical SAM ThiC family, central domain"/>
    <property type="match status" value="1"/>
</dbReference>
<dbReference type="HAMAP" id="MF_00089">
    <property type="entry name" value="ThiC"/>
    <property type="match status" value="1"/>
</dbReference>
<dbReference type="InterPro" id="IPR037509">
    <property type="entry name" value="ThiC"/>
</dbReference>
<dbReference type="InterPro" id="IPR025747">
    <property type="entry name" value="ThiC-associated_dom"/>
</dbReference>
<dbReference type="InterPro" id="IPR038521">
    <property type="entry name" value="ThiC/Bza_core_dom"/>
</dbReference>
<dbReference type="InterPro" id="IPR002817">
    <property type="entry name" value="ThiC/BzaA/B"/>
</dbReference>
<dbReference type="NCBIfam" id="NF006763">
    <property type="entry name" value="PRK09284.1"/>
    <property type="match status" value="1"/>
</dbReference>
<dbReference type="NCBIfam" id="NF009895">
    <property type="entry name" value="PRK13352.1"/>
    <property type="match status" value="1"/>
</dbReference>
<dbReference type="NCBIfam" id="TIGR00190">
    <property type="entry name" value="thiC"/>
    <property type="match status" value="1"/>
</dbReference>
<dbReference type="PANTHER" id="PTHR30557:SF1">
    <property type="entry name" value="PHOSPHOMETHYLPYRIMIDINE SYNTHASE, CHLOROPLASTIC"/>
    <property type="match status" value="1"/>
</dbReference>
<dbReference type="PANTHER" id="PTHR30557">
    <property type="entry name" value="THIAMINE BIOSYNTHESIS PROTEIN THIC"/>
    <property type="match status" value="1"/>
</dbReference>
<dbReference type="Pfam" id="PF13667">
    <property type="entry name" value="ThiC-associated"/>
    <property type="match status" value="1"/>
</dbReference>
<dbReference type="Pfam" id="PF01964">
    <property type="entry name" value="ThiC_Rad_SAM"/>
    <property type="match status" value="1"/>
</dbReference>
<dbReference type="SFLD" id="SFLDF00407">
    <property type="entry name" value="phosphomethylpyrimidine_syntha"/>
    <property type="match status" value="1"/>
</dbReference>
<dbReference type="SFLD" id="SFLDG01114">
    <property type="entry name" value="phosphomethylpyrimidine_syntha"/>
    <property type="match status" value="1"/>
</dbReference>
<dbReference type="SFLD" id="SFLDS00113">
    <property type="entry name" value="Radical_SAM_Phosphomethylpyrim"/>
    <property type="match status" value="1"/>
</dbReference>
<comment type="function">
    <text evidence="1">Catalyzes the synthesis of the hydroxymethylpyrimidine phosphate (HMP-P) moiety of thiamine from aminoimidazole ribotide (AIR) in a radical S-adenosyl-L-methionine (SAM)-dependent reaction.</text>
</comment>
<comment type="catalytic activity">
    <reaction evidence="1">
        <text>5-amino-1-(5-phospho-beta-D-ribosyl)imidazole + S-adenosyl-L-methionine = 4-amino-2-methyl-5-(phosphooxymethyl)pyrimidine + CO + 5'-deoxyadenosine + formate + L-methionine + 3 H(+)</text>
        <dbReference type="Rhea" id="RHEA:24840"/>
        <dbReference type="ChEBI" id="CHEBI:15378"/>
        <dbReference type="ChEBI" id="CHEBI:15740"/>
        <dbReference type="ChEBI" id="CHEBI:17245"/>
        <dbReference type="ChEBI" id="CHEBI:17319"/>
        <dbReference type="ChEBI" id="CHEBI:57844"/>
        <dbReference type="ChEBI" id="CHEBI:58354"/>
        <dbReference type="ChEBI" id="CHEBI:59789"/>
        <dbReference type="ChEBI" id="CHEBI:137981"/>
        <dbReference type="EC" id="4.1.99.17"/>
    </reaction>
</comment>
<comment type="cofactor">
    <cofactor evidence="1">
        <name>[4Fe-4S] cluster</name>
        <dbReference type="ChEBI" id="CHEBI:49883"/>
    </cofactor>
    <text evidence="1">Binds 1 [4Fe-4S] cluster per subunit. The cluster is coordinated with 3 cysteines and an exchangeable S-adenosyl-L-methionine.</text>
</comment>
<comment type="pathway">
    <text evidence="1">Cofactor biosynthesis; thiamine diphosphate biosynthesis.</text>
</comment>
<comment type="subunit">
    <text evidence="1">Homodimer.</text>
</comment>
<comment type="similarity">
    <text evidence="1">Belongs to the ThiC family.</text>
</comment>
<protein>
    <recommendedName>
        <fullName evidence="1">Phosphomethylpyrimidine synthase</fullName>
        <ecNumber evidence="1">4.1.99.17</ecNumber>
    </recommendedName>
    <alternativeName>
        <fullName evidence="1">Hydroxymethylpyrimidine phosphate synthase</fullName>
        <shortName evidence="1">HMP-P synthase</shortName>
        <shortName evidence="1">HMP-phosphate synthase</shortName>
        <shortName evidence="1">HMPP synthase</shortName>
    </alternativeName>
    <alternativeName>
        <fullName evidence="1">Thiamine biosynthesis protein ThiC</fullName>
    </alternativeName>
</protein>
<keyword id="KW-0004">4Fe-4S</keyword>
<keyword id="KW-0408">Iron</keyword>
<keyword id="KW-0411">Iron-sulfur</keyword>
<keyword id="KW-0456">Lyase</keyword>
<keyword id="KW-0479">Metal-binding</keyword>
<keyword id="KW-0949">S-adenosyl-L-methionine</keyword>
<keyword id="KW-0784">Thiamine biosynthesis</keyword>
<keyword id="KW-0862">Zinc</keyword>
<sequence length="625" mass="70144">MNQLTNLSSAEISAQHEQDAKDLTRILPASKKVYIEGSRPDIQVPMREISLTDTPTGLGGEHNPPIMVYDTSGVYTDPNVQIDLNKGLPSVRQKWIEERNDTDVLSGLTSKFGQERLKDIRTADIRFAHIQNPRRAKAGKNVTQMHYAKQGIITPEMEYIAIRENQRQHEAVDMRQHPGQNFGAKNLKEITPEFVRQEVAEGRAIIPANINHPELEPMIIGRNFLVKINANIGNSALGSSIDEEVAKMTWATRWGADTIMDLSTGKNIHETREWIIRNSPVPIGTVPIYQALEKVDGVAENLTWEIFKDTLIEQAEQGVDYFTIHAGVLLRYVPLTANRLTGIVSRGGSIMAQWCLAHHEENFLYTHFDEICEIMKAYDVSFSLGDGLRPGCIQDANDEAQFSELKTLGELTHRAWERDVQVMIEGPGHVPMHMIKENMDLQLEVCKEAPFYTLGPLTTDIAPGYDHITSAIGAAMIGWYGTAMLCYVTPKEHLGLPNKKDVKDGIITYKIAAHAADLAKGHPGAQARDNALSKARFEFRWDDQFNLSLDPDTARSMHDETLPKEAHKSAHFCSMCGPKFCSMKITQNVRDYANNLTNSDSEVEEGLKAMKEVYQEQGQKLYHKV</sequence>
<gene>
    <name evidence="1" type="primary">thiC</name>
    <name type="ordered locus">ABSDF3281</name>
</gene>
<accession>B0VMD7</accession>
<evidence type="ECO:0000255" key="1">
    <source>
        <dbReference type="HAMAP-Rule" id="MF_00089"/>
    </source>
</evidence>
<reference key="1">
    <citation type="journal article" date="2008" name="PLoS ONE">
        <title>Comparative analysis of Acinetobacters: three genomes for three lifestyles.</title>
        <authorList>
            <person name="Vallenet D."/>
            <person name="Nordmann P."/>
            <person name="Barbe V."/>
            <person name="Poirel L."/>
            <person name="Mangenot S."/>
            <person name="Bataille E."/>
            <person name="Dossat C."/>
            <person name="Gas S."/>
            <person name="Kreimeyer A."/>
            <person name="Lenoble P."/>
            <person name="Oztas S."/>
            <person name="Poulain J."/>
            <person name="Segurens B."/>
            <person name="Robert C."/>
            <person name="Abergel C."/>
            <person name="Claverie J.-M."/>
            <person name="Raoult D."/>
            <person name="Medigue C."/>
            <person name="Weissenbach J."/>
            <person name="Cruveiller S."/>
        </authorList>
    </citation>
    <scope>NUCLEOTIDE SEQUENCE [LARGE SCALE GENOMIC DNA]</scope>
    <source>
        <strain>SDF</strain>
    </source>
</reference>